<comment type="function">
    <text evidence="1">GTPase that plays an essential role in the late steps of ribosome biogenesis.</text>
</comment>
<comment type="subunit">
    <text evidence="1">Associates with the 50S ribosomal subunit.</text>
</comment>
<comment type="similarity">
    <text evidence="1">Belongs to the TRAFAC class TrmE-Era-EngA-EngB-Septin-like GTPase superfamily. EngA (Der) GTPase family.</text>
</comment>
<dbReference type="EMBL" id="CP000348">
    <property type="protein sequence ID" value="ABJ79424.1"/>
    <property type="molecule type" value="Genomic_DNA"/>
</dbReference>
<dbReference type="RefSeq" id="WP_011670498.1">
    <property type="nucleotide sequence ID" value="NC_008508.1"/>
</dbReference>
<dbReference type="SMR" id="Q04ZS1"/>
<dbReference type="KEGG" id="lbl:LBL_2000"/>
<dbReference type="HOGENOM" id="CLU_016077_6_1_12"/>
<dbReference type="GO" id="GO:0005525">
    <property type="term" value="F:GTP binding"/>
    <property type="evidence" value="ECO:0007669"/>
    <property type="project" value="UniProtKB-UniRule"/>
</dbReference>
<dbReference type="GO" id="GO:0043022">
    <property type="term" value="F:ribosome binding"/>
    <property type="evidence" value="ECO:0007669"/>
    <property type="project" value="TreeGrafter"/>
</dbReference>
<dbReference type="GO" id="GO:0042254">
    <property type="term" value="P:ribosome biogenesis"/>
    <property type="evidence" value="ECO:0007669"/>
    <property type="project" value="UniProtKB-KW"/>
</dbReference>
<dbReference type="CDD" id="cd01894">
    <property type="entry name" value="EngA1"/>
    <property type="match status" value="1"/>
</dbReference>
<dbReference type="CDD" id="cd01895">
    <property type="entry name" value="EngA2"/>
    <property type="match status" value="1"/>
</dbReference>
<dbReference type="FunFam" id="3.40.50.300:FF:000040">
    <property type="entry name" value="GTPase Der"/>
    <property type="match status" value="1"/>
</dbReference>
<dbReference type="Gene3D" id="3.30.300.20">
    <property type="match status" value="1"/>
</dbReference>
<dbReference type="Gene3D" id="3.40.50.300">
    <property type="entry name" value="P-loop containing nucleotide triphosphate hydrolases"/>
    <property type="match status" value="2"/>
</dbReference>
<dbReference type="HAMAP" id="MF_00195">
    <property type="entry name" value="GTPase_Der"/>
    <property type="match status" value="1"/>
</dbReference>
<dbReference type="InterPro" id="IPR031166">
    <property type="entry name" value="G_ENGA"/>
</dbReference>
<dbReference type="InterPro" id="IPR006073">
    <property type="entry name" value="GTP-bd"/>
</dbReference>
<dbReference type="InterPro" id="IPR016484">
    <property type="entry name" value="GTPase_Der"/>
</dbReference>
<dbReference type="InterPro" id="IPR032859">
    <property type="entry name" value="KH_dom-like"/>
</dbReference>
<dbReference type="InterPro" id="IPR015946">
    <property type="entry name" value="KH_dom-like_a/b"/>
</dbReference>
<dbReference type="InterPro" id="IPR027417">
    <property type="entry name" value="P-loop_NTPase"/>
</dbReference>
<dbReference type="InterPro" id="IPR005225">
    <property type="entry name" value="Small_GTP-bd"/>
</dbReference>
<dbReference type="NCBIfam" id="TIGR03594">
    <property type="entry name" value="GTPase_EngA"/>
    <property type="match status" value="1"/>
</dbReference>
<dbReference type="NCBIfam" id="TIGR00231">
    <property type="entry name" value="small_GTP"/>
    <property type="match status" value="2"/>
</dbReference>
<dbReference type="PANTHER" id="PTHR43834">
    <property type="entry name" value="GTPASE DER"/>
    <property type="match status" value="1"/>
</dbReference>
<dbReference type="PANTHER" id="PTHR43834:SF6">
    <property type="entry name" value="GTPASE DER"/>
    <property type="match status" value="1"/>
</dbReference>
<dbReference type="Pfam" id="PF14714">
    <property type="entry name" value="KH_dom-like"/>
    <property type="match status" value="1"/>
</dbReference>
<dbReference type="Pfam" id="PF01926">
    <property type="entry name" value="MMR_HSR1"/>
    <property type="match status" value="2"/>
</dbReference>
<dbReference type="PIRSF" id="PIRSF006485">
    <property type="entry name" value="GTP-binding_EngA"/>
    <property type="match status" value="1"/>
</dbReference>
<dbReference type="PRINTS" id="PR00326">
    <property type="entry name" value="GTP1OBG"/>
</dbReference>
<dbReference type="SUPFAM" id="SSF52540">
    <property type="entry name" value="P-loop containing nucleoside triphosphate hydrolases"/>
    <property type="match status" value="2"/>
</dbReference>
<dbReference type="PROSITE" id="PS51712">
    <property type="entry name" value="G_ENGA"/>
    <property type="match status" value="2"/>
</dbReference>
<protein>
    <recommendedName>
        <fullName evidence="1">GTPase Der</fullName>
    </recommendedName>
    <alternativeName>
        <fullName evidence="1">GTP-binding protein EngA</fullName>
    </alternativeName>
</protein>
<name>DER_LEPBL</name>
<proteinExistence type="inferred from homology"/>
<feature type="chain" id="PRO_1000099136" description="GTPase Der">
    <location>
        <begin position="1"/>
        <end position="487"/>
    </location>
</feature>
<feature type="domain" description="EngA-type G 1">
    <location>
        <begin position="28"/>
        <end position="197"/>
    </location>
</feature>
<feature type="domain" description="EngA-type G 2">
    <location>
        <begin position="225"/>
        <end position="401"/>
    </location>
</feature>
<feature type="domain" description="KH-like" evidence="1">
    <location>
        <begin position="402"/>
        <end position="486"/>
    </location>
</feature>
<feature type="region of interest" description="Disordered" evidence="2">
    <location>
        <begin position="1"/>
        <end position="20"/>
    </location>
</feature>
<feature type="binding site" evidence="1">
    <location>
        <begin position="34"/>
        <end position="41"/>
    </location>
    <ligand>
        <name>GTP</name>
        <dbReference type="ChEBI" id="CHEBI:37565"/>
        <label>1</label>
    </ligand>
</feature>
<feature type="binding site" evidence="1">
    <location>
        <begin position="83"/>
        <end position="87"/>
    </location>
    <ligand>
        <name>GTP</name>
        <dbReference type="ChEBI" id="CHEBI:37565"/>
        <label>1</label>
    </ligand>
</feature>
<feature type="binding site" evidence="1">
    <location>
        <begin position="149"/>
        <end position="152"/>
    </location>
    <ligand>
        <name>GTP</name>
        <dbReference type="ChEBI" id="CHEBI:37565"/>
        <label>1</label>
    </ligand>
</feature>
<feature type="binding site" evidence="1">
    <location>
        <begin position="231"/>
        <end position="238"/>
    </location>
    <ligand>
        <name>GTP</name>
        <dbReference type="ChEBI" id="CHEBI:37565"/>
        <label>2</label>
    </ligand>
</feature>
<feature type="binding site" evidence="1">
    <location>
        <begin position="278"/>
        <end position="282"/>
    </location>
    <ligand>
        <name>GTP</name>
        <dbReference type="ChEBI" id="CHEBI:37565"/>
        <label>2</label>
    </ligand>
</feature>
<feature type="binding site" evidence="1">
    <location>
        <begin position="343"/>
        <end position="346"/>
    </location>
    <ligand>
        <name>GTP</name>
        <dbReference type="ChEBI" id="CHEBI:37565"/>
        <label>2</label>
    </ligand>
</feature>
<reference key="1">
    <citation type="journal article" date="2006" name="Proc. Natl. Acad. Sci. U.S.A.">
        <title>Genome reduction in Leptospira borgpetersenii reflects limited transmission potential.</title>
        <authorList>
            <person name="Bulach D.M."/>
            <person name="Zuerner R.L."/>
            <person name="Wilson P."/>
            <person name="Seemann T."/>
            <person name="McGrath A."/>
            <person name="Cullen P.A."/>
            <person name="Davis J."/>
            <person name="Johnson M."/>
            <person name="Kuczek E."/>
            <person name="Alt D.P."/>
            <person name="Peterson-Burch B."/>
            <person name="Coppel R.L."/>
            <person name="Rood J.I."/>
            <person name="Davies J.K."/>
            <person name="Adler B."/>
        </authorList>
    </citation>
    <scope>NUCLEOTIDE SEQUENCE [LARGE SCALE GENOMIC DNA]</scope>
    <source>
        <strain>L550</strain>
    </source>
</reference>
<gene>
    <name evidence="1" type="primary">der</name>
    <name type="synonym">engA</name>
    <name type="ordered locus">LBL_2000</name>
</gene>
<sequence length="487" mass="55278">MAKAVRKSNSEETVPIKAPRKAPGEKIPVVSIVGRQNVGKSTLFNSLLKKKLAITEDYPGVTRDVLSARVYQEEKDLDFYLCDTPGLDIENPDSLSQSILEAAYRQLNESDVIIFLLDKNLVTVADHTLLDYLRKKYGPVDKPIIYCVNKADKELDEFDLEEFYRMGLPEVLPISATGRKNLGLLLEKIKFFLSSKPGKVWIEKISASKKKDAQPLPLAEEDYEFRLAIVGKPNSGKSSLLNAVCGYERAVVSDVAGTTRDSVDTLLEFGNRKLLLTDTAGIRKHSKTAEALEYYSYQRTLKAIESSDLVIHLLDAKKGFGDFDKKITSLLQEKGKPFLIAVNKWDSIEDKTDKTFREYKEKLYSRFPLLNEVPIVTISATERLRVQKLIDLSFDLASRSRRKVSTSELNKNLKNWMSQAGRSFSAHQPPKMLYCTQVSTSPFHLILFVNHVEYFKSNLISFLKKKLTEAYDLQGIPVRLEFRSDRK</sequence>
<accession>Q04ZS1</accession>
<evidence type="ECO:0000255" key="1">
    <source>
        <dbReference type="HAMAP-Rule" id="MF_00195"/>
    </source>
</evidence>
<evidence type="ECO:0000256" key="2">
    <source>
        <dbReference type="SAM" id="MobiDB-lite"/>
    </source>
</evidence>
<keyword id="KW-0342">GTP-binding</keyword>
<keyword id="KW-0547">Nucleotide-binding</keyword>
<keyword id="KW-0677">Repeat</keyword>
<keyword id="KW-0690">Ribosome biogenesis</keyword>
<organism>
    <name type="scientific">Leptospira borgpetersenii serovar Hardjo-bovis (strain L550)</name>
    <dbReference type="NCBI Taxonomy" id="355276"/>
    <lineage>
        <taxon>Bacteria</taxon>
        <taxon>Pseudomonadati</taxon>
        <taxon>Spirochaetota</taxon>
        <taxon>Spirochaetia</taxon>
        <taxon>Leptospirales</taxon>
        <taxon>Leptospiraceae</taxon>
        <taxon>Leptospira</taxon>
    </lineage>
</organism>